<proteinExistence type="evidence at protein level"/>
<gene>
    <name type="primary">BIK1</name>
    <name type="ordered locus">YCL029C</name>
    <name type="ORF">YCL29C</name>
</gene>
<feature type="chain" id="PRO_0000083513" description="Nuclear fusion protein BIK1">
    <location>
        <begin position="1"/>
        <end position="440"/>
    </location>
</feature>
<feature type="domain" description="CAP-Gly" evidence="2">
    <location>
        <begin position="26"/>
        <end position="69"/>
    </location>
</feature>
<feature type="region of interest" description="Disordered" evidence="3">
    <location>
        <begin position="108"/>
        <end position="157"/>
    </location>
</feature>
<feature type="coiled-coil region" evidence="1">
    <location>
        <begin position="190"/>
        <end position="397"/>
    </location>
</feature>
<feature type="short sequence motif" description="CCHC-box">
    <location>
        <begin position="416"/>
        <end position="429"/>
    </location>
</feature>
<feature type="compositionally biased region" description="Polar residues" evidence="3">
    <location>
        <begin position="125"/>
        <end position="139"/>
    </location>
</feature>
<feature type="compositionally biased region" description="Basic and acidic residues" evidence="3">
    <location>
        <begin position="141"/>
        <end position="157"/>
    </location>
</feature>
<feature type="modified residue" description="Phosphoserine" evidence="6">
    <location>
        <position position="95"/>
    </location>
</feature>
<feature type="modified residue" description="Phosphoserine" evidence="5 6">
    <location>
        <position position="110"/>
    </location>
</feature>
<feature type="helix" evidence="8">
    <location>
        <begin position="2"/>
        <end position="5"/>
    </location>
</feature>
<feature type="turn" evidence="8">
    <location>
        <begin position="6"/>
        <end position="9"/>
    </location>
</feature>
<feature type="strand" evidence="8">
    <location>
        <begin position="11"/>
        <end position="14"/>
    </location>
</feature>
<feature type="turn" evidence="8">
    <location>
        <begin position="15"/>
        <end position="17"/>
    </location>
</feature>
<feature type="strand" evidence="8">
    <location>
        <begin position="18"/>
        <end position="26"/>
    </location>
</feature>
<feature type="strand" evidence="8">
    <location>
        <begin position="35"/>
        <end position="39"/>
    </location>
</feature>
<feature type="strand" evidence="7">
    <location>
        <begin position="41"/>
        <end position="43"/>
    </location>
</feature>
<feature type="strand" evidence="8">
    <location>
        <begin position="45"/>
        <end position="51"/>
    </location>
</feature>
<feature type="strand" evidence="8">
    <location>
        <begin position="65"/>
        <end position="69"/>
    </location>
</feature>
<feature type="helix" evidence="8">
    <location>
        <begin position="70"/>
        <end position="79"/>
    </location>
</feature>
<name>BIK1_YEAST</name>
<protein>
    <recommendedName>
        <fullName>Nuclear fusion protein BIK1</fullName>
    </recommendedName>
</protein>
<reference key="1">
    <citation type="journal article" date="1987" name="Mol. Cell. Biol.">
        <title>Two genes required for cell fusion during yeast conjugation: evidence for a pheromone-induced surface protein.</title>
        <authorList>
            <person name="Trueheart J."/>
            <person name="Boeke J.D."/>
            <person name="Fink G.R."/>
        </authorList>
    </citation>
    <scope>NUCLEOTIDE SEQUENCE [GENOMIC DNA]</scope>
</reference>
<reference key="2">
    <citation type="journal article" date="1991" name="Yeast">
        <title>The complete sequence of a 11,953 bp fragment from C1G on chromosome III encompasses four new open reading frames.</title>
        <authorList>
            <person name="Rad M.R."/>
            <person name="Luetzenkirchen K."/>
            <person name="Xu G."/>
            <person name="Kleinhans U."/>
            <person name="Hollenberg C.P."/>
        </authorList>
    </citation>
    <scope>NUCLEOTIDE SEQUENCE [GENOMIC DNA]</scope>
</reference>
<reference key="3">
    <citation type="journal article" date="1992" name="Nature">
        <title>The complete DNA sequence of yeast chromosome III.</title>
        <authorList>
            <person name="Oliver S.G."/>
            <person name="van der Aart Q.J.M."/>
            <person name="Agostoni-Carbone M.L."/>
            <person name="Aigle M."/>
            <person name="Alberghina L."/>
            <person name="Alexandraki D."/>
            <person name="Antoine G."/>
            <person name="Anwar R."/>
            <person name="Ballesta J.P.G."/>
            <person name="Benit P."/>
            <person name="Berben G."/>
            <person name="Bergantino E."/>
            <person name="Biteau N."/>
            <person name="Bolle P.-A."/>
            <person name="Bolotin-Fukuhara M."/>
            <person name="Brown A."/>
            <person name="Brown A.J.P."/>
            <person name="Buhler J.-M."/>
            <person name="Carcano C."/>
            <person name="Carignani G."/>
            <person name="Cederberg H."/>
            <person name="Chanet R."/>
            <person name="Contreras R."/>
            <person name="Crouzet M."/>
            <person name="Daignan-Fornier B."/>
            <person name="Defoor E."/>
            <person name="Delgado M.D."/>
            <person name="Demolder J."/>
            <person name="Doira C."/>
            <person name="Dubois E."/>
            <person name="Dujon B."/>
            <person name="Duesterhoeft A."/>
            <person name="Erdmann D."/>
            <person name="Esteban M."/>
            <person name="Fabre F."/>
            <person name="Fairhead C."/>
            <person name="Faye G."/>
            <person name="Feldmann H."/>
            <person name="Fiers W."/>
            <person name="Francingues-Gaillard M.-C."/>
            <person name="Franco L."/>
            <person name="Frontali L."/>
            <person name="Fukuhara H."/>
            <person name="Fuller L.J."/>
            <person name="Galland P."/>
            <person name="Gent M.E."/>
            <person name="Gigot D."/>
            <person name="Gilliquet V."/>
            <person name="Glansdorff N."/>
            <person name="Goffeau A."/>
            <person name="Grenson M."/>
            <person name="Grisanti P."/>
            <person name="Grivell L.A."/>
            <person name="de Haan M."/>
            <person name="Haasemann M."/>
            <person name="Hatat D."/>
            <person name="Hoenicka J."/>
            <person name="Hegemann J.H."/>
            <person name="Herbert C.J."/>
            <person name="Hilger F."/>
            <person name="Hohmann S."/>
            <person name="Hollenberg C.P."/>
            <person name="Huse K."/>
            <person name="Iborra F."/>
            <person name="Indge K.J."/>
            <person name="Isono K."/>
            <person name="Jacq C."/>
            <person name="Jacquet M."/>
            <person name="James C.M."/>
            <person name="Jauniaux J.-C."/>
            <person name="Jia Y."/>
            <person name="Jimenez A."/>
            <person name="Kelly A."/>
            <person name="Kleinhans U."/>
            <person name="Kreisl P."/>
            <person name="Lanfranchi G."/>
            <person name="Lewis C."/>
            <person name="van der Linden C.G."/>
            <person name="Lucchini G."/>
            <person name="Lutzenkirchen K."/>
            <person name="Maat M.J."/>
            <person name="Mallet L."/>
            <person name="Mannhaupt G."/>
            <person name="Martegani E."/>
            <person name="Mathieu A."/>
            <person name="Maurer C.T.C."/>
            <person name="McConnell D."/>
            <person name="McKee R.A."/>
            <person name="Messenguy F."/>
            <person name="Mewes H.-W."/>
            <person name="Molemans F."/>
            <person name="Montague M.A."/>
            <person name="Muzi Falconi M."/>
            <person name="Navas L."/>
            <person name="Newlon C.S."/>
            <person name="Noone D."/>
            <person name="Pallier C."/>
            <person name="Panzeri L."/>
            <person name="Pearson B.M."/>
            <person name="Perea J."/>
            <person name="Philippsen P."/>
            <person name="Pierard A."/>
            <person name="Planta R.J."/>
            <person name="Plevani P."/>
            <person name="Poetsch B."/>
            <person name="Pohl F.M."/>
            <person name="Purnelle B."/>
            <person name="Ramezani Rad M."/>
            <person name="Rasmussen S.W."/>
            <person name="Raynal A."/>
            <person name="Remacha M.A."/>
            <person name="Richterich P."/>
            <person name="Roberts A.B."/>
            <person name="Rodriguez F."/>
            <person name="Sanz E."/>
            <person name="Schaaff-Gerstenschlaeger I."/>
            <person name="Scherens B."/>
            <person name="Schweitzer B."/>
            <person name="Shu Y."/>
            <person name="Skala J."/>
            <person name="Slonimski P.P."/>
            <person name="Sor F."/>
            <person name="Soustelle C."/>
            <person name="Spiegelberg R."/>
            <person name="Stateva L.I."/>
            <person name="Steensma H.Y."/>
            <person name="Steiner S."/>
            <person name="Thierry A."/>
            <person name="Thireos G."/>
            <person name="Tzermia M."/>
            <person name="Urrestarazu L.A."/>
            <person name="Valle G."/>
            <person name="Vetter I."/>
            <person name="van Vliet-Reedijk J.C."/>
            <person name="Voet M."/>
            <person name="Volckaert G."/>
            <person name="Vreken P."/>
            <person name="Wang H."/>
            <person name="Warmington J.R."/>
            <person name="von Wettstein D."/>
            <person name="Wicksteed B.L."/>
            <person name="Wilson C."/>
            <person name="Wurst H."/>
            <person name="Xu G."/>
            <person name="Yoshikawa A."/>
            <person name="Zimmermann F.K."/>
            <person name="Sgouros J.G."/>
        </authorList>
    </citation>
    <scope>NUCLEOTIDE SEQUENCE [LARGE SCALE GENOMIC DNA]</scope>
    <source>
        <strain>ATCC 204508 / S288c</strain>
    </source>
</reference>
<reference key="4">
    <citation type="journal article" date="2014" name="G3 (Bethesda)">
        <title>The reference genome sequence of Saccharomyces cerevisiae: Then and now.</title>
        <authorList>
            <person name="Engel S.R."/>
            <person name="Dietrich F.S."/>
            <person name="Fisk D.G."/>
            <person name="Binkley G."/>
            <person name="Balakrishnan R."/>
            <person name="Costanzo M.C."/>
            <person name="Dwight S.S."/>
            <person name="Hitz B.C."/>
            <person name="Karra K."/>
            <person name="Nash R.S."/>
            <person name="Weng S."/>
            <person name="Wong E.D."/>
            <person name="Lloyd P."/>
            <person name="Skrzypek M.S."/>
            <person name="Miyasato S.R."/>
            <person name="Simison M."/>
            <person name="Cherry J.M."/>
        </authorList>
    </citation>
    <scope>GENOME REANNOTATION</scope>
    <source>
        <strain>ATCC 204508 / S288c</strain>
    </source>
</reference>
<reference key="5">
    <citation type="journal article" date="1990" name="J. Cell Biol.">
        <title>BIK1, a protein required for microtubule function during mating and mitosis in Saccharomyces cerevisiae, colocalizes with tubulin.</title>
        <authorList>
            <person name="Berlin V."/>
            <person name="Styles C.A."/>
            <person name="Fink G.R."/>
        </authorList>
    </citation>
    <scope>POSSIBLE FUNCTION</scope>
</reference>
<reference key="6">
    <citation type="journal article" date="2003" name="Nature">
        <title>Global analysis of protein expression in yeast.</title>
        <authorList>
            <person name="Ghaemmaghami S."/>
            <person name="Huh W.-K."/>
            <person name="Bower K."/>
            <person name="Howson R.W."/>
            <person name="Belle A."/>
            <person name="Dephoure N."/>
            <person name="O'Shea E.K."/>
            <person name="Weissman J.S."/>
        </authorList>
    </citation>
    <scope>LEVEL OF PROTEIN EXPRESSION [LARGE SCALE ANALYSIS]</scope>
</reference>
<reference key="7">
    <citation type="journal article" date="2007" name="J. Proteome Res.">
        <title>Large-scale phosphorylation analysis of alpha-factor-arrested Saccharomyces cerevisiae.</title>
        <authorList>
            <person name="Li X."/>
            <person name="Gerber S.A."/>
            <person name="Rudner A.D."/>
            <person name="Beausoleil S.A."/>
            <person name="Haas W."/>
            <person name="Villen J."/>
            <person name="Elias J.E."/>
            <person name="Gygi S.P."/>
        </authorList>
    </citation>
    <scope>PHOSPHORYLATION [LARGE SCALE ANALYSIS] AT SER-110</scope>
    <scope>IDENTIFICATION BY MASS SPECTROMETRY [LARGE SCALE ANALYSIS]</scope>
    <source>
        <strain>ADR376</strain>
    </source>
</reference>
<reference key="8">
    <citation type="journal article" date="2008" name="Mol. Cell. Proteomics">
        <title>A multidimensional chromatography technology for in-depth phosphoproteome analysis.</title>
        <authorList>
            <person name="Albuquerque C.P."/>
            <person name="Smolka M.B."/>
            <person name="Payne S.H."/>
            <person name="Bafna V."/>
            <person name="Eng J."/>
            <person name="Zhou H."/>
        </authorList>
    </citation>
    <scope>PHOSPHORYLATION [LARGE SCALE ANALYSIS] AT SER-95 AND SER-110</scope>
    <scope>IDENTIFICATION BY MASS SPECTROMETRY [LARGE SCALE ANALYSIS]</scope>
</reference>
<comment type="function">
    <text>Required for nuclear fusion, chromosome disjunction, and nuclear segregation during mitosis. Probably required for the formation or stabilization of microtubules during mitosis and for spindle pole body fusion during conjugation.</text>
</comment>
<comment type="subcellular location">
    <subcellularLocation>
        <location>Cytoplasm</location>
        <location>Cytoskeleton</location>
        <location>Microtubule organizing center</location>
        <location>Spindle pole body</location>
    </subcellularLocation>
    <subcellularLocation>
        <location>Cytoplasm</location>
        <location>Cytoskeleton</location>
        <location>Spindle</location>
    </subcellularLocation>
    <subcellularLocation>
        <location>Cytoplasm</location>
    </subcellularLocation>
    <text>And mitotic spindle.</text>
</comment>
<comment type="miscellaneous">
    <text evidence="4">Present with 300 molecules/cell in log phase SD medium.</text>
</comment>
<evidence type="ECO:0000255" key="1"/>
<evidence type="ECO:0000255" key="2">
    <source>
        <dbReference type="PROSITE-ProRule" id="PRU00045"/>
    </source>
</evidence>
<evidence type="ECO:0000256" key="3">
    <source>
        <dbReference type="SAM" id="MobiDB-lite"/>
    </source>
</evidence>
<evidence type="ECO:0000269" key="4">
    <source>
    </source>
</evidence>
<evidence type="ECO:0007744" key="5">
    <source>
    </source>
</evidence>
<evidence type="ECO:0007744" key="6">
    <source>
    </source>
</evidence>
<evidence type="ECO:0007829" key="7">
    <source>
        <dbReference type="PDB" id="6FC5"/>
    </source>
</evidence>
<evidence type="ECO:0007829" key="8">
    <source>
        <dbReference type="PDB" id="6FC6"/>
    </source>
</evidence>
<dbReference type="EMBL" id="M16717">
    <property type="protein sequence ID" value="AAA34614.1"/>
    <property type="molecule type" value="Genomic_DNA"/>
</dbReference>
<dbReference type="EMBL" id="X59720">
    <property type="protein sequence ID" value="CAA42356.1"/>
    <property type="molecule type" value="Genomic_DNA"/>
</dbReference>
<dbReference type="EMBL" id="BK006937">
    <property type="protein sequence ID" value="DAA07455.1"/>
    <property type="molecule type" value="Genomic_DNA"/>
</dbReference>
<dbReference type="PIR" id="B27061">
    <property type="entry name" value="B27061"/>
</dbReference>
<dbReference type="RefSeq" id="NP_009901.1">
    <property type="nucleotide sequence ID" value="NM_001178674.1"/>
</dbReference>
<dbReference type="PDB" id="6FC5">
    <property type="method" value="X-ray"/>
    <property type="resolution" value="1.88 A"/>
    <property type="chains" value="A=1-100"/>
</dbReference>
<dbReference type="PDB" id="6FC6">
    <property type="method" value="X-ray"/>
    <property type="resolution" value="1.80 A"/>
    <property type="chains" value="A=1-100"/>
</dbReference>
<dbReference type="PDBsum" id="6FC5"/>
<dbReference type="PDBsum" id="6FC6"/>
<dbReference type="SASBDB" id="P11709"/>
<dbReference type="SMR" id="P11709"/>
<dbReference type="BioGRID" id="30954">
    <property type="interactions" value="253"/>
</dbReference>
<dbReference type="DIP" id="DIP-2341N"/>
<dbReference type="FunCoup" id="P11709">
    <property type="interactions" value="233"/>
</dbReference>
<dbReference type="IntAct" id="P11709">
    <property type="interactions" value="6"/>
</dbReference>
<dbReference type="MINT" id="P11709"/>
<dbReference type="STRING" id="4932.YCL029C"/>
<dbReference type="iPTMnet" id="P11709"/>
<dbReference type="PaxDb" id="4932-YCL029C"/>
<dbReference type="PeptideAtlas" id="P11709"/>
<dbReference type="TopDownProteomics" id="P11709"/>
<dbReference type="EnsemblFungi" id="YCL029C_mRNA">
    <property type="protein sequence ID" value="YCL029C"/>
    <property type="gene ID" value="YCL029C"/>
</dbReference>
<dbReference type="GeneID" id="850328"/>
<dbReference type="KEGG" id="sce:YCL029C"/>
<dbReference type="AGR" id="SGD:S000000534"/>
<dbReference type="SGD" id="S000000534">
    <property type="gene designation" value="BIK1"/>
</dbReference>
<dbReference type="VEuPathDB" id="FungiDB:YCL029C"/>
<dbReference type="eggNOG" id="KOG4568">
    <property type="taxonomic scope" value="Eukaryota"/>
</dbReference>
<dbReference type="HOGENOM" id="CLU_031641_0_0_1"/>
<dbReference type="InParanoid" id="P11709"/>
<dbReference type="OMA" id="YQKKIGC"/>
<dbReference type="OrthoDB" id="2130750at2759"/>
<dbReference type="BioCyc" id="YEAST:G3O-29290-MONOMER"/>
<dbReference type="BioGRID-ORCS" id="850328">
    <property type="hits" value="7 hits in 10 CRISPR screens"/>
</dbReference>
<dbReference type="CD-CODE" id="876000F7">
    <property type="entry name" value="Centrosome"/>
</dbReference>
<dbReference type="CD-CODE" id="F813C9D9">
    <property type="entry name" value="TIP body"/>
</dbReference>
<dbReference type="PRO" id="PR:P11709"/>
<dbReference type="Proteomes" id="UP000002311">
    <property type="component" value="Chromosome III"/>
</dbReference>
<dbReference type="RNAct" id="P11709">
    <property type="molecule type" value="protein"/>
</dbReference>
<dbReference type="GO" id="GO:0005938">
    <property type="term" value="C:cell cortex"/>
    <property type="evidence" value="ECO:0000314"/>
    <property type="project" value="SGD"/>
</dbReference>
<dbReference type="GO" id="GO:0051286">
    <property type="term" value="C:cell tip"/>
    <property type="evidence" value="ECO:0000318"/>
    <property type="project" value="GO_Central"/>
</dbReference>
<dbReference type="GO" id="GO:0000776">
    <property type="term" value="C:kinetochore"/>
    <property type="evidence" value="ECO:0000314"/>
    <property type="project" value="SGD"/>
</dbReference>
<dbReference type="GO" id="GO:0043332">
    <property type="term" value="C:mating projection tip"/>
    <property type="evidence" value="ECO:0000314"/>
    <property type="project" value="SGD"/>
</dbReference>
<dbReference type="GO" id="GO:0005875">
    <property type="term" value="C:microtubule associated complex"/>
    <property type="evidence" value="ECO:0000318"/>
    <property type="project" value="GO_Central"/>
</dbReference>
<dbReference type="GO" id="GO:0035371">
    <property type="term" value="C:microtubule plus-end"/>
    <property type="evidence" value="ECO:0000314"/>
    <property type="project" value="SGD"/>
</dbReference>
<dbReference type="GO" id="GO:0005819">
    <property type="term" value="C:spindle"/>
    <property type="evidence" value="ECO:0000314"/>
    <property type="project" value="SGD"/>
</dbReference>
<dbReference type="GO" id="GO:0005876">
    <property type="term" value="C:spindle microtubule"/>
    <property type="evidence" value="ECO:0000314"/>
    <property type="project" value="SGD"/>
</dbReference>
<dbReference type="GO" id="GO:0005816">
    <property type="term" value="C:spindle pole body"/>
    <property type="evidence" value="ECO:0000314"/>
    <property type="project" value="SGD"/>
</dbReference>
<dbReference type="GO" id="GO:0019894">
    <property type="term" value="F:kinesin binding"/>
    <property type="evidence" value="ECO:0000314"/>
    <property type="project" value="SGD"/>
</dbReference>
<dbReference type="GO" id="GO:0008017">
    <property type="term" value="F:microtubule binding"/>
    <property type="evidence" value="ECO:0000314"/>
    <property type="project" value="SGD"/>
</dbReference>
<dbReference type="GO" id="GO:0030543">
    <property type="term" value="P:2-micrometer plasmid partitioning"/>
    <property type="evidence" value="ECO:0000315"/>
    <property type="project" value="SGD"/>
</dbReference>
<dbReference type="GO" id="GO:0051301">
    <property type="term" value="P:cell division"/>
    <property type="evidence" value="ECO:0007669"/>
    <property type="project" value="UniProtKB-KW"/>
</dbReference>
<dbReference type="GO" id="GO:0000132">
    <property type="term" value="P:establishment of mitotic spindle orientation"/>
    <property type="evidence" value="ECO:0000318"/>
    <property type="project" value="GO_Central"/>
</dbReference>
<dbReference type="GO" id="GO:0000742">
    <property type="term" value="P:karyogamy involved in conjugation with cellular fusion"/>
    <property type="evidence" value="ECO:0000315"/>
    <property type="project" value="SGD"/>
</dbReference>
<dbReference type="GO" id="GO:0007020">
    <property type="term" value="P:microtubule nucleation"/>
    <property type="evidence" value="ECO:0000315"/>
    <property type="project" value="SGD"/>
</dbReference>
<dbReference type="GO" id="GO:0000022">
    <property type="term" value="P:mitotic spindle elongation"/>
    <property type="evidence" value="ECO:0000316"/>
    <property type="project" value="SGD"/>
</dbReference>
<dbReference type="GO" id="GO:0031115">
    <property type="term" value="P:negative regulation of microtubule polymerization"/>
    <property type="evidence" value="ECO:0000314"/>
    <property type="project" value="SGD"/>
</dbReference>
<dbReference type="GO" id="GO:0000743">
    <property type="term" value="P:nuclear migration involved in conjugation with cellular fusion"/>
    <property type="evidence" value="ECO:0000315"/>
    <property type="project" value="SGD"/>
</dbReference>
<dbReference type="GO" id="GO:1902440">
    <property type="term" value="P:protein localization to mitotic spindle pole body"/>
    <property type="evidence" value="ECO:0000315"/>
    <property type="project" value="SGD"/>
</dbReference>
<dbReference type="GO" id="GO:0000819">
    <property type="term" value="P:sister chromatid segregation"/>
    <property type="evidence" value="ECO:0000315"/>
    <property type="project" value="SGD"/>
</dbReference>
<dbReference type="FunFam" id="2.30.30.190:FF:000018">
    <property type="entry name" value="BIK1p Microtubule-associated protein"/>
    <property type="match status" value="1"/>
</dbReference>
<dbReference type="Gene3D" id="2.30.30.190">
    <property type="entry name" value="CAP Gly-rich-like domain"/>
    <property type="match status" value="1"/>
</dbReference>
<dbReference type="InterPro" id="IPR036859">
    <property type="entry name" value="CAP-Gly_dom_sf"/>
</dbReference>
<dbReference type="InterPro" id="IPR000938">
    <property type="entry name" value="CAP-Gly_domain"/>
</dbReference>
<dbReference type="PANTHER" id="PTHR18916">
    <property type="entry name" value="DYNACTIN 1-RELATED MICROTUBULE-BINDING"/>
    <property type="match status" value="1"/>
</dbReference>
<dbReference type="PANTHER" id="PTHR18916:SF94">
    <property type="entry name" value="NUCLEAR FUSION PROTEIN BIK1"/>
    <property type="match status" value="1"/>
</dbReference>
<dbReference type="Pfam" id="PF01302">
    <property type="entry name" value="CAP_GLY"/>
    <property type="match status" value="1"/>
</dbReference>
<dbReference type="SMART" id="SM01052">
    <property type="entry name" value="CAP_GLY"/>
    <property type="match status" value="1"/>
</dbReference>
<dbReference type="SUPFAM" id="SSF74924">
    <property type="entry name" value="Cap-Gly domain"/>
    <property type="match status" value="1"/>
</dbReference>
<dbReference type="PROSITE" id="PS00845">
    <property type="entry name" value="CAP_GLY_1"/>
    <property type="match status" value="1"/>
</dbReference>
<dbReference type="PROSITE" id="PS50245">
    <property type="entry name" value="CAP_GLY_2"/>
    <property type="match status" value="1"/>
</dbReference>
<keyword id="KW-0002">3D-structure</keyword>
<keyword id="KW-0131">Cell cycle</keyword>
<keyword id="KW-0132">Cell division</keyword>
<keyword id="KW-0175">Coiled coil</keyword>
<keyword id="KW-0963">Cytoplasm</keyword>
<keyword id="KW-0206">Cytoskeleton</keyword>
<keyword id="KW-0493">Microtubule</keyword>
<keyword id="KW-0498">Mitosis</keyword>
<keyword id="KW-0597">Phosphoprotein</keyword>
<keyword id="KW-1185">Reference proteome</keyword>
<accession>P11709</accession>
<accession>D6VQY6</accession>
<sequence>MDRYQRKIGCFIQIPNLGRGQLKYVGPVDTKAGMFAGVDLLANIGKNDGSFMGKKYFQTEYPQSGLFIQLQKVASLIEKASISQTSRRTTMEPLSIPKNRSIVRLTNQFSPMDDPKSPTPMRSFRITSRHSGNQQSMDQEASDHHQQQEFGYDNREDRMEVDSILSSDRKANHNTTSDWKPDNGHMNDLNSSEVTIELREAQLTIEKLQRKQLHYKRLLDDQRMVLEEVQPTFDRYEATIQEREKEIDHLKQQLELERRQQAKQKQFFDAENEQLLAVVSQLHEEIKENEERNLSHNQPTGANEDVELLKKQLEQLRNIEDQFELHKTKWAKEREQLKMHNDSLSKEYQNLSKELFLTKPQDSSSEEVASLTKKLEEANEKIKQLEQAQAQTAVESLPIFDPPAPVDTTAGRQQWCEHCDTMGHNTAECPHHNPDNQQFF</sequence>
<organism>
    <name type="scientific">Saccharomyces cerevisiae (strain ATCC 204508 / S288c)</name>
    <name type="common">Baker's yeast</name>
    <dbReference type="NCBI Taxonomy" id="559292"/>
    <lineage>
        <taxon>Eukaryota</taxon>
        <taxon>Fungi</taxon>
        <taxon>Dikarya</taxon>
        <taxon>Ascomycota</taxon>
        <taxon>Saccharomycotina</taxon>
        <taxon>Saccharomycetes</taxon>
        <taxon>Saccharomycetales</taxon>
        <taxon>Saccharomycetaceae</taxon>
        <taxon>Saccharomyces</taxon>
    </lineage>
</organism>